<accession>B8J6Y3</accession>
<gene>
    <name evidence="1" type="primary">recF</name>
    <name type="ordered locus">A2cp1_0003</name>
</gene>
<protein>
    <recommendedName>
        <fullName evidence="1">DNA replication and repair protein RecF</fullName>
    </recommendedName>
</protein>
<keyword id="KW-0067">ATP-binding</keyword>
<keyword id="KW-0963">Cytoplasm</keyword>
<keyword id="KW-0227">DNA damage</keyword>
<keyword id="KW-0234">DNA repair</keyword>
<keyword id="KW-0235">DNA replication</keyword>
<keyword id="KW-0238">DNA-binding</keyword>
<keyword id="KW-0547">Nucleotide-binding</keyword>
<keyword id="KW-0742">SOS response</keyword>
<evidence type="ECO:0000255" key="1">
    <source>
        <dbReference type="HAMAP-Rule" id="MF_00365"/>
    </source>
</evidence>
<feature type="chain" id="PRO_1000193340" description="DNA replication and repair protein RecF">
    <location>
        <begin position="1"/>
        <end position="372"/>
    </location>
</feature>
<feature type="binding site" evidence="1">
    <location>
        <begin position="30"/>
        <end position="37"/>
    </location>
    <ligand>
        <name>ATP</name>
        <dbReference type="ChEBI" id="CHEBI:30616"/>
    </ligand>
</feature>
<reference key="1">
    <citation type="submission" date="2009-01" db="EMBL/GenBank/DDBJ databases">
        <title>Complete sequence of Anaeromyxobacter dehalogenans 2CP-1.</title>
        <authorList>
            <person name="Lucas S."/>
            <person name="Copeland A."/>
            <person name="Lapidus A."/>
            <person name="Glavina del Rio T."/>
            <person name="Dalin E."/>
            <person name="Tice H."/>
            <person name="Bruce D."/>
            <person name="Goodwin L."/>
            <person name="Pitluck S."/>
            <person name="Saunders E."/>
            <person name="Brettin T."/>
            <person name="Detter J.C."/>
            <person name="Han C."/>
            <person name="Larimer F."/>
            <person name="Land M."/>
            <person name="Hauser L."/>
            <person name="Kyrpides N."/>
            <person name="Ovchinnikova G."/>
            <person name="Beliaev A.S."/>
            <person name="Richardson P."/>
        </authorList>
    </citation>
    <scope>NUCLEOTIDE SEQUENCE [LARGE SCALE GENOMIC DNA]</scope>
    <source>
        <strain>2CP-1 / ATCC BAA-258</strain>
    </source>
</reference>
<proteinExistence type="inferred from homology"/>
<comment type="function">
    <text evidence="1">The RecF protein is involved in DNA metabolism; it is required for DNA replication and normal SOS inducibility. RecF binds preferentially to single-stranded, linear DNA. It also seems to bind ATP.</text>
</comment>
<comment type="subcellular location">
    <subcellularLocation>
        <location evidence="1">Cytoplasm</location>
    </subcellularLocation>
</comment>
<comment type="similarity">
    <text evidence="1">Belongs to the RecF family.</text>
</comment>
<organism>
    <name type="scientific">Anaeromyxobacter dehalogenans (strain 2CP-1 / ATCC BAA-258)</name>
    <dbReference type="NCBI Taxonomy" id="455488"/>
    <lineage>
        <taxon>Bacteria</taxon>
        <taxon>Pseudomonadati</taxon>
        <taxon>Myxococcota</taxon>
        <taxon>Myxococcia</taxon>
        <taxon>Myxococcales</taxon>
        <taxon>Cystobacterineae</taxon>
        <taxon>Anaeromyxobacteraceae</taxon>
        <taxon>Anaeromyxobacter</taxon>
    </lineage>
</organism>
<dbReference type="EMBL" id="CP001359">
    <property type="protein sequence ID" value="ACL63364.1"/>
    <property type="molecule type" value="Genomic_DNA"/>
</dbReference>
<dbReference type="RefSeq" id="WP_012631460.1">
    <property type="nucleotide sequence ID" value="NC_011891.1"/>
</dbReference>
<dbReference type="SMR" id="B8J6Y3"/>
<dbReference type="KEGG" id="acp:A2cp1_0003"/>
<dbReference type="HOGENOM" id="CLU_040267_0_1_7"/>
<dbReference type="Proteomes" id="UP000007089">
    <property type="component" value="Chromosome"/>
</dbReference>
<dbReference type="GO" id="GO:0005737">
    <property type="term" value="C:cytoplasm"/>
    <property type="evidence" value="ECO:0007669"/>
    <property type="project" value="UniProtKB-SubCell"/>
</dbReference>
<dbReference type="GO" id="GO:0005524">
    <property type="term" value="F:ATP binding"/>
    <property type="evidence" value="ECO:0007669"/>
    <property type="project" value="UniProtKB-UniRule"/>
</dbReference>
<dbReference type="GO" id="GO:0003697">
    <property type="term" value="F:single-stranded DNA binding"/>
    <property type="evidence" value="ECO:0007669"/>
    <property type="project" value="UniProtKB-UniRule"/>
</dbReference>
<dbReference type="GO" id="GO:0006260">
    <property type="term" value="P:DNA replication"/>
    <property type="evidence" value="ECO:0007669"/>
    <property type="project" value="UniProtKB-UniRule"/>
</dbReference>
<dbReference type="GO" id="GO:0000731">
    <property type="term" value="P:DNA synthesis involved in DNA repair"/>
    <property type="evidence" value="ECO:0007669"/>
    <property type="project" value="TreeGrafter"/>
</dbReference>
<dbReference type="GO" id="GO:0006302">
    <property type="term" value="P:double-strand break repair"/>
    <property type="evidence" value="ECO:0007669"/>
    <property type="project" value="TreeGrafter"/>
</dbReference>
<dbReference type="GO" id="GO:0009432">
    <property type="term" value="P:SOS response"/>
    <property type="evidence" value="ECO:0007669"/>
    <property type="project" value="UniProtKB-UniRule"/>
</dbReference>
<dbReference type="Gene3D" id="3.40.50.300">
    <property type="entry name" value="P-loop containing nucleotide triphosphate hydrolases"/>
    <property type="match status" value="1"/>
</dbReference>
<dbReference type="Gene3D" id="1.20.1050.90">
    <property type="entry name" value="RecF/RecN/SMC, N-terminal domain"/>
    <property type="match status" value="1"/>
</dbReference>
<dbReference type="HAMAP" id="MF_00365">
    <property type="entry name" value="RecF"/>
    <property type="match status" value="1"/>
</dbReference>
<dbReference type="InterPro" id="IPR001238">
    <property type="entry name" value="DNA-binding_RecF"/>
</dbReference>
<dbReference type="InterPro" id="IPR018078">
    <property type="entry name" value="DNA-binding_RecF_CS"/>
</dbReference>
<dbReference type="InterPro" id="IPR027417">
    <property type="entry name" value="P-loop_NTPase"/>
</dbReference>
<dbReference type="InterPro" id="IPR003395">
    <property type="entry name" value="RecF/RecN/SMC_N"/>
</dbReference>
<dbReference type="InterPro" id="IPR042174">
    <property type="entry name" value="RecF_2"/>
</dbReference>
<dbReference type="NCBIfam" id="TIGR00611">
    <property type="entry name" value="recf"/>
    <property type="match status" value="1"/>
</dbReference>
<dbReference type="PANTHER" id="PTHR32182">
    <property type="entry name" value="DNA REPLICATION AND REPAIR PROTEIN RECF"/>
    <property type="match status" value="1"/>
</dbReference>
<dbReference type="PANTHER" id="PTHR32182:SF0">
    <property type="entry name" value="DNA REPLICATION AND REPAIR PROTEIN RECF"/>
    <property type="match status" value="1"/>
</dbReference>
<dbReference type="Pfam" id="PF02463">
    <property type="entry name" value="SMC_N"/>
    <property type="match status" value="1"/>
</dbReference>
<dbReference type="SUPFAM" id="SSF52540">
    <property type="entry name" value="P-loop containing nucleoside triphosphate hydrolases"/>
    <property type="match status" value="1"/>
</dbReference>
<dbReference type="PROSITE" id="PS00618">
    <property type="entry name" value="RECF_2"/>
    <property type="match status" value="1"/>
</dbReference>
<name>RECF_ANAD2</name>
<sequence>MKLLSLHVQDFRNLAAVELAPSPRATVLLGENGQGKTNLLEAIYFLTTLKPLRAVRLAELVRFGAEQGAVAGDFEGPGGVRRVAVQVAAGGRTATLDGKALGSGARLDDYFEGLASVCFSPDDLLLVKAGPDGRRRFLDRAAFNRWPAVLGEAREYVRALRARNAALRAGPAEVEASFREPLVRAGARILVRRRDLVAELAPRLQAAFAEISGPAAPEAHLAYRAAGGVDVEHPEAEVAARLAHALEARLERDREKGFTSAGPHMDDLVLALGGKGARLYGSQGQQRALVLALKIAEIENLRAALGRPPLLLLDDVSSELDPAKNRFLLGYLAALPAQAFLTSTDRRLIEPAAGPDTAFFEVRSGVVSPLVS</sequence>